<keyword id="KW-0167">Capsid protein</keyword>
<keyword id="KW-1139">Helical capsid protein</keyword>
<keyword id="KW-1048">Host nucleus</keyword>
<keyword id="KW-0945">Host-virus interaction</keyword>
<keyword id="KW-0687">Ribonucleoprotein</keyword>
<keyword id="KW-0694">RNA-binding</keyword>
<keyword id="KW-0543">Viral nucleoprotein</keyword>
<keyword id="KW-1163">Viral penetration into host nucleus</keyword>
<keyword id="KW-0946">Virion</keyword>
<keyword id="KW-1160">Virus entry into host cell</keyword>
<name>NCAP_I51A0</name>
<dbReference type="EMBL" id="CY021824">
    <property type="protein sequence ID" value="ABP49485.1"/>
    <property type="molecule type" value="Viral_cRNA"/>
</dbReference>
<dbReference type="SMR" id="A4U7B0"/>
<dbReference type="PRO" id="PR:A4U7B0"/>
<dbReference type="Proteomes" id="UP000007556">
    <property type="component" value="Genome"/>
</dbReference>
<dbReference type="GO" id="GO:0019029">
    <property type="term" value="C:helical viral capsid"/>
    <property type="evidence" value="ECO:0007669"/>
    <property type="project" value="UniProtKB-UniRule"/>
</dbReference>
<dbReference type="GO" id="GO:0043657">
    <property type="term" value="C:host cell"/>
    <property type="evidence" value="ECO:0007669"/>
    <property type="project" value="GOC"/>
</dbReference>
<dbReference type="GO" id="GO:0042025">
    <property type="term" value="C:host cell nucleus"/>
    <property type="evidence" value="ECO:0007669"/>
    <property type="project" value="UniProtKB-SubCell"/>
</dbReference>
<dbReference type="GO" id="GO:1990904">
    <property type="term" value="C:ribonucleoprotein complex"/>
    <property type="evidence" value="ECO:0007669"/>
    <property type="project" value="UniProtKB-KW"/>
</dbReference>
<dbReference type="GO" id="GO:0019013">
    <property type="term" value="C:viral nucleocapsid"/>
    <property type="evidence" value="ECO:0007669"/>
    <property type="project" value="UniProtKB-UniRule"/>
</dbReference>
<dbReference type="GO" id="GO:0003723">
    <property type="term" value="F:RNA binding"/>
    <property type="evidence" value="ECO:0007669"/>
    <property type="project" value="UniProtKB-UniRule"/>
</dbReference>
<dbReference type="GO" id="GO:0005198">
    <property type="term" value="F:structural molecule activity"/>
    <property type="evidence" value="ECO:0007669"/>
    <property type="project" value="UniProtKB-UniRule"/>
</dbReference>
<dbReference type="GO" id="GO:0046718">
    <property type="term" value="P:symbiont entry into host cell"/>
    <property type="evidence" value="ECO:0007669"/>
    <property type="project" value="UniProtKB-KW"/>
</dbReference>
<dbReference type="GO" id="GO:0075732">
    <property type="term" value="P:viral penetration into host nucleus"/>
    <property type="evidence" value="ECO:0007669"/>
    <property type="project" value="UniProtKB-UniRule"/>
</dbReference>
<dbReference type="HAMAP" id="MF_04070">
    <property type="entry name" value="INFV_NCAP"/>
    <property type="match status" value="1"/>
</dbReference>
<dbReference type="InterPro" id="IPR002141">
    <property type="entry name" value="Flu_NP"/>
</dbReference>
<dbReference type="Pfam" id="PF00506">
    <property type="entry name" value="Flu_NP"/>
    <property type="match status" value="1"/>
</dbReference>
<dbReference type="SUPFAM" id="SSF161003">
    <property type="entry name" value="flu NP-like"/>
    <property type="match status" value="1"/>
</dbReference>
<proteinExistence type="inferred from homology"/>
<organism>
    <name type="scientific">Influenza A virus (strain A/USA:Albany/12/1951 H1N1)</name>
    <dbReference type="NCBI Taxonomy" id="425580"/>
    <lineage>
        <taxon>Viruses</taxon>
        <taxon>Riboviria</taxon>
        <taxon>Orthornavirae</taxon>
        <taxon>Negarnaviricota</taxon>
        <taxon>Polyploviricotina</taxon>
        <taxon>Insthoviricetes</taxon>
        <taxon>Articulavirales</taxon>
        <taxon>Orthomyxoviridae</taxon>
        <taxon>Alphainfluenzavirus</taxon>
        <taxon>Alphainfluenzavirus influenzae</taxon>
        <taxon>Influenza A virus</taxon>
    </lineage>
</organism>
<feature type="chain" id="PRO_0000372938" description="Nucleoprotein">
    <location>
        <begin position="1"/>
        <end position="498"/>
    </location>
</feature>
<feature type="region of interest" description="Disordered" evidence="2">
    <location>
        <begin position="1"/>
        <end position="21"/>
    </location>
</feature>
<feature type="short sequence motif" description="Unconventional nuclear localization signal" evidence="1">
    <location>
        <begin position="1"/>
        <end position="18"/>
    </location>
</feature>
<feature type="short sequence motif" description="Bipartite nuclear localization signal" evidence="1">
    <location>
        <begin position="198"/>
        <end position="216"/>
    </location>
</feature>
<feature type="compositionally biased region" description="Basic and acidic residues" evidence="2">
    <location>
        <begin position="8"/>
        <end position="21"/>
    </location>
</feature>
<comment type="function">
    <text evidence="1">Encapsidates the negative strand viral RNA, protecting it from nucleases. The encapsidated genomic RNA is termed the ribonucleoprotein (RNP) and serves as template for transcription and replication. The RNP needs to be localized in the host nucleus to start an infectious cycle, but is too large to diffuse through the nuclear pore complex. NP comprises at least 2 nuclear localization signals that are responsible for the active RNP import into the nucleus through cellular importin alpha/beta pathway. Later in the infection, nclear export of RNPs are mediated through viral proteins NEP interacting with M1 which binds nucleoproteins. It is possible that nucleoprotein binds directly host exportin-1/XPO1 and plays an active role in RNPs nuclear export. M1 interaction with RNP seems to hide nucleoprotein's nuclear localization signals. Soon after a virion infects a new cell, M1 dissociates from the RNP under acidification of the virion driven by M2 protein. Dissociation of M1 from RNP unmasks nucleoprotein's nuclear localization signals, targeting the RNP to the nucleus.</text>
</comment>
<comment type="subunit">
    <text evidence="1">Homomultimerizes to form the nucleocapsid. May bind host exportin-1/XPO1. Binds to viral genomic RNA. Protein-RNA contacts are mediated by a combination of electrostatic interactions between positively charged residues and the phosphate backbone and planar interactions between aromatic side chains and bases.</text>
</comment>
<comment type="subcellular location">
    <subcellularLocation>
        <location evidence="1">Virion</location>
    </subcellularLocation>
    <subcellularLocation>
        <location evidence="1">Host nucleus</location>
    </subcellularLocation>
</comment>
<comment type="PTM">
    <text evidence="1">Late in virus-infected cells, may be cleaved from a 56-kDa protein to a 53-kDa protein by a cellular caspase. This cleavage might be a marker for the onset of apoptosis in infected cells or have a specific function in virus host interaction.</text>
</comment>
<comment type="similarity">
    <text evidence="1">Belongs to the influenza viruses nucleoprotein family.</text>
</comment>
<protein>
    <recommendedName>
        <fullName evidence="1">Nucleoprotein</fullName>
    </recommendedName>
    <alternativeName>
        <fullName evidence="1">Nucleocapsid protein</fullName>
        <shortName evidence="1">Protein N</shortName>
    </alternativeName>
</protein>
<evidence type="ECO:0000255" key="1">
    <source>
        <dbReference type="HAMAP-Rule" id="MF_04070"/>
    </source>
</evidence>
<evidence type="ECO:0000256" key="2">
    <source>
        <dbReference type="SAM" id="MobiDB-lite"/>
    </source>
</evidence>
<organismHost>
    <name type="scientific">Aves</name>
    <dbReference type="NCBI Taxonomy" id="8782"/>
</organismHost>
<organismHost>
    <name type="scientific">Homo sapiens</name>
    <name type="common">Human</name>
    <dbReference type="NCBI Taxonomy" id="9606"/>
</organismHost>
<organismHost>
    <name type="scientific">Sus scrofa</name>
    <name type="common">Pig</name>
    <dbReference type="NCBI Taxonomy" id="9823"/>
</organismHost>
<gene>
    <name evidence="1" type="primary">NP</name>
</gene>
<accession>A4U7B0</accession>
<reference key="1">
    <citation type="submission" date="2007-04" db="EMBL/GenBank/DDBJ databases">
        <title>The NIAID influenza genome sequencing project.</title>
        <authorList>
            <person name="Spiro D."/>
            <person name="Sengamalay N."/>
            <person name="Boyne A."/>
            <person name="Bera J."/>
            <person name="Ghedin E."/>
            <person name="Zaborsky J."/>
            <person name="Subbu V."/>
            <person name="Sparenborg J."/>
            <person name="Gallagher T."/>
            <person name="Overton L."/>
            <person name="Althoff R."/>
            <person name="Liu X."/>
            <person name="Sitz J."/>
            <person name="Katzel D."/>
            <person name="Neupane R."/>
            <person name="Shumway M."/>
            <person name="Koo H."/>
            <person name="Griesemer S."/>
            <person name="StGeorge K."/>
            <person name="Bennett R."/>
            <person name="Taylor J."/>
            <person name="Bao Y."/>
            <person name="Bolotov P."/>
            <person name="Dernovoy D."/>
            <person name="Kiryutin B."/>
            <person name="Lipman D.J."/>
            <person name="Tatusova T."/>
        </authorList>
    </citation>
    <scope>NUCLEOTIDE SEQUENCE [GENOMIC RNA]</scope>
</reference>
<reference key="2">
    <citation type="submission" date="2007-04" db="EMBL/GenBank/DDBJ databases">
        <authorList>
            <consortium name="The NIAID Influenza Genome Sequencing Consortium"/>
        </authorList>
    </citation>
    <scope>NUCLEOTIDE SEQUENCE [GENOMIC RNA]</scope>
</reference>
<sequence>MASQGTKRSYEQMETDGERQNATEIRASVGKMIDGIGRFYIQMCTELKLSDYEGRLIQNSLTIERMVLSAFDERRNKYLEEHPSAGKDPKKTGGPIYKRVDRKWMRELVLYDKEEIRRIWRQANNGDDATAGLTHMMIWHSNLNDTTYQRTRALVRTGMDPRMCSLMQGSTLPRRSGAAGAAVKGVGTMVMELIRMIKRGINDRNFWRGENGRKTRIAYERMCNILKGKFQTAAQRAMMDQVRESRNPGNAEIEDLIFLARSALILRGSVAHKSCLPACVYGPAVASGYDFEKEGYSLVGIDPFKLLQNSQVYSLIRPNENPAHKSQLVWMACNSAAFEDLRVSSFIRGTKVIPRGKLSTRGVQIASNENMDTMESSTLELRSRYWAIRTRSGGNTNQQRASAGQISIQPTFSVQRNLPFDKTTIMAAFTGNAEGRTSDMRAEIIRVMESAKPEEVSFQGRGVFELSDEKAANPIVPSFDMSNEGSYFFGDNAEEYDN</sequence>